<evidence type="ECO:0000255" key="1">
    <source>
        <dbReference type="HAMAP-Rule" id="MF_00367"/>
    </source>
</evidence>
<evidence type="ECO:0000255" key="2">
    <source>
        <dbReference type="PROSITE-ProRule" id="PRU01050"/>
    </source>
</evidence>
<keyword id="KW-0997">Cell inner membrane</keyword>
<keyword id="KW-1003">Cell membrane</keyword>
<keyword id="KW-0963">Cytoplasm</keyword>
<keyword id="KW-0342">GTP-binding</keyword>
<keyword id="KW-0472">Membrane</keyword>
<keyword id="KW-0547">Nucleotide-binding</keyword>
<keyword id="KW-0690">Ribosome biogenesis</keyword>
<keyword id="KW-0694">RNA-binding</keyword>
<keyword id="KW-0699">rRNA-binding</keyword>
<comment type="function">
    <text evidence="1">An essential GTPase that binds both GDP and GTP, with rapid nucleotide exchange. Plays a role in 16S rRNA processing and 30S ribosomal subunit biogenesis and possibly also in cell cycle regulation and energy metabolism.</text>
</comment>
<comment type="subunit">
    <text evidence="1">Monomer.</text>
</comment>
<comment type="subcellular location">
    <subcellularLocation>
        <location>Cytoplasm</location>
    </subcellularLocation>
    <subcellularLocation>
        <location evidence="1">Cell inner membrane</location>
        <topology evidence="1">Peripheral membrane protein</topology>
    </subcellularLocation>
</comment>
<comment type="similarity">
    <text evidence="1 2">Belongs to the TRAFAC class TrmE-Era-EngA-EngB-Septin-like GTPase superfamily. Era GTPase family.</text>
</comment>
<sequence>MSIDKSYCGFIAIVGRPNVGKSTLLNKLLGQKISITSRKAQTTRHRIVGIHTEGAYQAIYVDTPGLHMEEKRAINRLMNKAASSSIGDVELVIFVVEGTRWTPDDEMVLNKLREGKAPVILAVNKVDNVQEKADLLPHLQFLASQMNFLDIVPISAETGLNVATIAAIVRKHLPEATHHFPEDYITDRSQRFMASEIIREKLMRFLGAELPYSVTVEIERFVSNERGGYDINGLILVEREGQKKMVIGNKGAKIKTIGIEARKDMQEMFEAPVHLELWVKVKSGWADDERALRSLGYVDDL</sequence>
<name>ERA_ECO5E</name>
<accession>B5Z140</accession>
<dbReference type="EMBL" id="CP001164">
    <property type="protein sequence ID" value="ACI38879.1"/>
    <property type="molecule type" value="Genomic_DNA"/>
</dbReference>
<dbReference type="RefSeq" id="WP_000020744.1">
    <property type="nucleotide sequence ID" value="NC_011353.1"/>
</dbReference>
<dbReference type="SMR" id="B5Z140"/>
<dbReference type="KEGG" id="ecf:ECH74115_3802"/>
<dbReference type="HOGENOM" id="CLU_038009_1_2_6"/>
<dbReference type="GO" id="GO:0005829">
    <property type="term" value="C:cytosol"/>
    <property type="evidence" value="ECO:0007669"/>
    <property type="project" value="TreeGrafter"/>
</dbReference>
<dbReference type="GO" id="GO:0005886">
    <property type="term" value="C:plasma membrane"/>
    <property type="evidence" value="ECO:0007669"/>
    <property type="project" value="UniProtKB-SubCell"/>
</dbReference>
<dbReference type="GO" id="GO:0005525">
    <property type="term" value="F:GTP binding"/>
    <property type="evidence" value="ECO:0007669"/>
    <property type="project" value="UniProtKB-UniRule"/>
</dbReference>
<dbReference type="GO" id="GO:0003924">
    <property type="term" value="F:GTPase activity"/>
    <property type="evidence" value="ECO:0007669"/>
    <property type="project" value="UniProtKB-UniRule"/>
</dbReference>
<dbReference type="GO" id="GO:0043024">
    <property type="term" value="F:ribosomal small subunit binding"/>
    <property type="evidence" value="ECO:0007669"/>
    <property type="project" value="TreeGrafter"/>
</dbReference>
<dbReference type="GO" id="GO:0070181">
    <property type="term" value="F:small ribosomal subunit rRNA binding"/>
    <property type="evidence" value="ECO:0007669"/>
    <property type="project" value="UniProtKB-UniRule"/>
</dbReference>
<dbReference type="GO" id="GO:0000028">
    <property type="term" value="P:ribosomal small subunit assembly"/>
    <property type="evidence" value="ECO:0007669"/>
    <property type="project" value="TreeGrafter"/>
</dbReference>
<dbReference type="CDD" id="cd04163">
    <property type="entry name" value="Era"/>
    <property type="match status" value="1"/>
</dbReference>
<dbReference type="CDD" id="cd22534">
    <property type="entry name" value="KH-II_Era"/>
    <property type="match status" value="1"/>
</dbReference>
<dbReference type="FunFam" id="3.30.300.20:FF:000003">
    <property type="entry name" value="GTPase Era"/>
    <property type="match status" value="1"/>
</dbReference>
<dbReference type="FunFam" id="3.40.50.300:FF:000094">
    <property type="entry name" value="GTPase Era"/>
    <property type="match status" value="1"/>
</dbReference>
<dbReference type="Gene3D" id="3.30.300.20">
    <property type="match status" value="1"/>
</dbReference>
<dbReference type="Gene3D" id="3.40.50.300">
    <property type="entry name" value="P-loop containing nucleotide triphosphate hydrolases"/>
    <property type="match status" value="1"/>
</dbReference>
<dbReference type="HAMAP" id="MF_00367">
    <property type="entry name" value="GTPase_Era"/>
    <property type="match status" value="1"/>
</dbReference>
<dbReference type="InterPro" id="IPR030388">
    <property type="entry name" value="G_ERA_dom"/>
</dbReference>
<dbReference type="InterPro" id="IPR006073">
    <property type="entry name" value="GTP-bd"/>
</dbReference>
<dbReference type="InterPro" id="IPR005662">
    <property type="entry name" value="GTPase_Era-like"/>
</dbReference>
<dbReference type="InterPro" id="IPR015946">
    <property type="entry name" value="KH_dom-like_a/b"/>
</dbReference>
<dbReference type="InterPro" id="IPR004044">
    <property type="entry name" value="KH_dom_type_2"/>
</dbReference>
<dbReference type="InterPro" id="IPR009019">
    <property type="entry name" value="KH_sf_prok-type"/>
</dbReference>
<dbReference type="InterPro" id="IPR027417">
    <property type="entry name" value="P-loop_NTPase"/>
</dbReference>
<dbReference type="InterPro" id="IPR005225">
    <property type="entry name" value="Small_GTP-bd"/>
</dbReference>
<dbReference type="NCBIfam" id="TIGR00436">
    <property type="entry name" value="era"/>
    <property type="match status" value="1"/>
</dbReference>
<dbReference type="NCBIfam" id="NF000908">
    <property type="entry name" value="PRK00089.1"/>
    <property type="match status" value="1"/>
</dbReference>
<dbReference type="NCBIfam" id="TIGR00231">
    <property type="entry name" value="small_GTP"/>
    <property type="match status" value="1"/>
</dbReference>
<dbReference type="PANTHER" id="PTHR42698">
    <property type="entry name" value="GTPASE ERA"/>
    <property type="match status" value="1"/>
</dbReference>
<dbReference type="PANTHER" id="PTHR42698:SF1">
    <property type="entry name" value="GTPASE ERA, MITOCHONDRIAL"/>
    <property type="match status" value="1"/>
</dbReference>
<dbReference type="Pfam" id="PF07650">
    <property type="entry name" value="KH_2"/>
    <property type="match status" value="1"/>
</dbReference>
<dbReference type="Pfam" id="PF01926">
    <property type="entry name" value="MMR_HSR1"/>
    <property type="match status" value="1"/>
</dbReference>
<dbReference type="SUPFAM" id="SSF52540">
    <property type="entry name" value="P-loop containing nucleoside triphosphate hydrolases"/>
    <property type="match status" value="1"/>
</dbReference>
<dbReference type="SUPFAM" id="SSF54814">
    <property type="entry name" value="Prokaryotic type KH domain (KH-domain type II)"/>
    <property type="match status" value="1"/>
</dbReference>
<dbReference type="PROSITE" id="PS51713">
    <property type="entry name" value="G_ERA"/>
    <property type="match status" value="1"/>
</dbReference>
<dbReference type="PROSITE" id="PS50823">
    <property type="entry name" value="KH_TYPE_2"/>
    <property type="match status" value="1"/>
</dbReference>
<reference key="1">
    <citation type="journal article" date="2011" name="Proc. Natl. Acad. Sci. U.S.A.">
        <title>Genomic anatomy of Escherichia coli O157:H7 outbreaks.</title>
        <authorList>
            <person name="Eppinger M."/>
            <person name="Mammel M.K."/>
            <person name="Leclerc J.E."/>
            <person name="Ravel J."/>
            <person name="Cebula T.A."/>
        </authorList>
    </citation>
    <scope>NUCLEOTIDE SEQUENCE [LARGE SCALE GENOMIC DNA]</scope>
    <source>
        <strain>EC4115 / EHEC</strain>
    </source>
</reference>
<proteinExistence type="inferred from homology"/>
<protein>
    <recommendedName>
        <fullName evidence="1">GTPase Era</fullName>
    </recommendedName>
</protein>
<organism>
    <name type="scientific">Escherichia coli O157:H7 (strain EC4115 / EHEC)</name>
    <dbReference type="NCBI Taxonomy" id="444450"/>
    <lineage>
        <taxon>Bacteria</taxon>
        <taxon>Pseudomonadati</taxon>
        <taxon>Pseudomonadota</taxon>
        <taxon>Gammaproteobacteria</taxon>
        <taxon>Enterobacterales</taxon>
        <taxon>Enterobacteriaceae</taxon>
        <taxon>Escherichia</taxon>
    </lineage>
</organism>
<gene>
    <name evidence="1" type="primary">era</name>
    <name type="ordered locus">ECH74115_3802</name>
</gene>
<feature type="chain" id="PRO_1000121319" description="GTPase Era">
    <location>
        <begin position="1"/>
        <end position="301"/>
    </location>
</feature>
<feature type="domain" description="Era-type G" evidence="2">
    <location>
        <begin position="7"/>
        <end position="175"/>
    </location>
</feature>
<feature type="domain" description="KH type-2" evidence="1">
    <location>
        <begin position="206"/>
        <end position="283"/>
    </location>
</feature>
<feature type="region of interest" description="G1" evidence="2">
    <location>
        <begin position="15"/>
        <end position="22"/>
    </location>
</feature>
<feature type="region of interest" description="G2" evidence="2">
    <location>
        <begin position="41"/>
        <end position="45"/>
    </location>
</feature>
<feature type="region of interest" description="G3" evidence="2">
    <location>
        <begin position="62"/>
        <end position="65"/>
    </location>
</feature>
<feature type="region of interest" description="G4" evidence="2">
    <location>
        <begin position="124"/>
        <end position="127"/>
    </location>
</feature>
<feature type="region of interest" description="G5" evidence="2">
    <location>
        <begin position="154"/>
        <end position="156"/>
    </location>
</feature>
<feature type="binding site" evidence="1">
    <location>
        <begin position="15"/>
        <end position="22"/>
    </location>
    <ligand>
        <name>GTP</name>
        <dbReference type="ChEBI" id="CHEBI:37565"/>
    </ligand>
</feature>
<feature type="binding site" evidence="1">
    <location>
        <begin position="62"/>
        <end position="66"/>
    </location>
    <ligand>
        <name>GTP</name>
        <dbReference type="ChEBI" id="CHEBI:37565"/>
    </ligand>
</feature>
<feature type="binding site" evidence="1">
    <location>
        <begin position="124"/>
        <end position="127"/>
    </location>
    <ligand>
        <name>GTP</name>
        <dbReference type="ChEBI" id="CHEBI:37565"/>
    </ligand>
</feature>